<keyword id="KW-0058">Aromatic hydrocarbons catabolism</keyword>
<keyword id="KW-0456">Lyase</keyword>
<keyword id="KW-0464">Manganese</keyword>
<keyword id="KW-0479">Metal-binding</keyword>
<keyword id="KW-1185">Reference proteome</keyword>
<feature type="chain" id="PRO_0000387887" description="4-hydroxy-2-oxovalerate aldolase 1">
    <location>
        <begin position="1"/>
        <end position="347"/>
    </location>
</feature>
<feature type="domain" description="Pyruvate carboxyltransferase" evidence="1">
    <location>
        <begin position="8"/>
        <end position="260"/>
    </location>
</feature>
<feature type="active site" description="Proton acceptor" evidence="1">
    <location>
        <position position="20"/>
    </location>
</feature>
<feature type="binding site" evidence="1">
    <location>
        <begin position="16"/>
        <end position="17"/>
    </location>
    <ligand>
        <name>substrate</name>
    </ligand>
</feature>
<feature type="binding site" evidence="1">
    <location>
        <position position="17"/>
    </location>
    <ligand>
        <name>Mn(2+)</name>
        <dbReference type="ChEBI" id="CHEBI:29035"/>
    </ligand>
</feature>
<feature type="binding site" evidence="1">
    <location>
        <position position="170"/>
    </location>
    <ligand>
        <name>substrate</name>
    </ligand>
</feature>
<feature type="binding site" evidence="1">
    <location>
        <position position="199"/>
    </location>
    <ligand>
        <name>Mn(2+)</name>
        <dbReference type="ChEBI" id="CHEBI:29035"/>
    </ligand>
</feature>
<feature type="binding site" evidence="1">
    <location>
        <position position="199"/>
    </location>
    <ligand>
        <name>substrate</name>
    </ligand>
</feature>
<feature type="binding site" evidence="1">
    <location>
        <position position="201"/>
    </location>
    <ligand>
        <name>Mn(2+)</name>
        <dbReference type="ChEBI" id="CHEBI:29035"/>
    </ligand>
</feature>
<feature type="binding site" evidence="1">
    <location>
        <position position="290"/>
    </location>
    <ligand>
        <name>substrate</name>
    </ligand>
</feature>
<feature type="site" description="Transition state stabilizer" evidence="1">
    <location>
        <position position="16"/>
    </location>
</feature>
<sequence length="347" mass="37818">MFDKTKKIYVSDVTLRDGMHAIRHQYSLEQAVRIARALDVAGVDSIEVAHGDGLQGSSFNYGFGAHTDLEWIAAVADVLKHAKVATLLLPGIGTIHDLKQAYEAGARIVRVATHCTEADISKQHIEYARHLGMDTVGFLMMSHMTTPRHLAEQAMRMESYGAQCVYVVDSGGALNMYDVADRFKAFRDVLKPETQTGMHAHHNLSLGVANSIVALEHGCDRIDASLTGMGAGAGNAPLEVFIATADRMGLNHGCDVKTLIDAAEDIVRPLQERPVRVDRETLALGYAGVYSSFLRHTEVAAQRYGLSAFDILIELGKRRMVGGQEDMIVDVALDLLQRRDARGAGAH</sequence>
<comment type="catalytic activity">
    <reaction evidence="1">
        <text>(S)-4-hydroxy-2-oxopentanoate = acetaldehyde + pyruvate</text>
        <dbReference type="Rhea" id="RHEA:22624"/>
        <dbReference type="ChEBI" id="CHEBI:15343"/>
        <dbReference type="ChEBI" id="CHEBI:15361"/>
        <dbReference type="ChEBI" id="CHEBI:73143"/>
        <dbReference type="EC" id="4.1.3.39"/>
    </reaction>
</comment>
<comment type="similarity">
    <text evidence="1">Belongs to the 4-hydroxy-2-oxovalerate aldolase family.</text>
</comment>
<gene>
    <name type="ordered locus">H16_A1807</name>
</gene>
<protein>
    <recommendedName>
        <fullName evidence="1">4-hydroxy-2-oxovalerate aldolase 1</fullName>
        <shortName evidence="1">HOA 1</shortName>
        <ecNumber evidence="1">4.1.3.39</ecNumber>
    </recommendedName>
    <alternativeName>
        <fullName evidence="1">4-hydroxy-2-keto-pentanoic acid aldolase 1</fullName>
    </alternativeName>
    <alternativeName>
        <fullName evidence="1">4-hydroxy-2-oxopentanoate aldolase 1</fullName>
    </alternativeName>
</protein>
<proteinExistence type="inferred from homology"/>
<organism>
    <name type="scientific">Cupriavidus necator (strain ATCC 17699 / DSM 428 / KCTC 22496 / NCIMB 10442 / H16 / Stanier 337)</name>
    <name type="common">Ralstonia eutropha</name>
    <dbReference type="NCBI Taxonomy" id="381666"/>
    <lineage>
        <taxon>Bacteria</taxon>
        <taxon>Pseudomonadati</taxon>
        <taxon>Pseudomonadota</taxon>
        <taxon>Betaproteobacteria</taxon>
        <taxon>Burkholderiales</taxon>
        <taxon>Burkholderiaceae</taxon>
        <taxon>Cupriavidus</taxon>
    </lineage>
</organism>
<name>HOA1_CUPNH</name>
<accession>Q0KAQ9</accession>
<evidence type="ECO:0000255" key="1">
    <source>
        <dbReference type="HAMAP-Rule" id="MF_01656"/>
    </source>
</evidence>
<dbReference type="EC" id="4.1.3.39" evidence="1"/>
<dbReference type="EMBL" id="AM260479">
    <property type="protein sequence ID" value="CAJ92912.1"/>
    <property type="molecule type" value="Genomic_DNA"/>
</dbReference>
<dbReference type="SMR" id="Q0KAQ9"/>
<dbReference type="STRING" id="381666.H16_A1807"/>
<dbReference type="KEGG" id="reh:H16_A1807"/>
<dbReference type="eggNOG" id="COG0119">
    <property type="taxonomic scope" value="Bacteria"/>
</dbReference>
<dbReference type="HOGENOM" id="CLU_049173_0_0_4"/>
<dbReference type="OrthoDB" id="9803573at2"/>
<dbReference type="Proteomes" id="UP000008210">
    <property type="component" value="Chromosome 1"/>
</dbReference>
<dbReference type="GO" id="GO:0003852">
    <property type="term" value="F:2-isopropylmalate synthase activity"/>
    <property type="evidence" value="ECO:0007669"/>
    <property type="project" value="TreeGrafter"/>
</dbReference>
<dbReference type="GO" id="GO:0008701">
    <property type="term" value="F:4-hydroxy-2-oxovalerate aldolase activity"/>
    <property type="evidence" value="ECO:0007669"/>
    <property type="project" value="UniProtKB-UniRule"/>
</dbReference>
<dbReference type="GO" id="GO:0030145">
    <property type="term" value="F:manganese ion binding"/>
    <property type="evidence" value="ECO:0007669"/>
    <property type="project" value="UniProtKB-UniRule"/>
</dbReference>
<dbReference type="GO" id="GO:0009056">
    <property type="term" value="P:catabolic process"/>
    <property type="evidence" value="ECO:0007669"/>
    <property type="project" value="UniProtKB-KW"/>
</dbReference>
<dbReference type="GO" id="GO:0009098">
    <property type="term" value="P:L-leucine biosynthetic process"/>
    <property type="evidence" value="ECO:0007669"/>
    <property type="project" value="TreeGrafter"/>
</dbReference>
<dbReference type="CDD" id="cd07943">
    <property type="entry name" value="DRE_TIM_HOA"/>
    <property type="match status" value="1"/>
</dbReference>
<dbReference type="FunFam" id="1.10.8.60:FF:000042">
    <property type="entry name" value="4-hydroxy-2-oxovalerate aldolase"/>
    <property type="match status" value="1"/>
</dbReference>
<dbReference type="Gene3D" id="1.10.8.60">
    <property type="match status" value="1"/>
</dbReference>
<dbReference type="Gene3D" id="3.20.20.70">
    <property type="entry name" value="Aldolase class I"/>
    <property type="match status" value="1"/>
</dbReference>
<dbReference type="HAMAP" id="MF_01656">
    <property type="entry name" value="HOA"/>
    <property type="match status" value="1"/>
</dbReference>
<dbReference type="InterPro" id="IPR050073">
    <property type="entry name" value="2-IPM_HCS-like"/>
</dbReference>
<dbReference type="InterPro" id="IPR017629">
    <property type="entry name" value="4OH_2_O-val_aldolase"/>
</dbReference>
<dbReference type="InterPro" id="IPR013785">
    <property type="entry name" value="Aldolase_TIM"/>
</dbReference>
<dbReference type="InterPro" id="IPR012425">
    <property type="entry name" value="DmpG_comm"/>
</dbReference>
<dbReference type="InterPro" id="IPR035685">
    <property type="entry name" value="DRE_TIM_HOA"/>
</dbReference>
<dbReference type="InterPro" id="IPR000891">
    <property type="entry name" value="PYR_CT"/>
</dbReference>
<dbReference type="NCBIfam" id="TIGR03217">
    <property type="entry name" value="4OH_2_O_val_ald"/>
    <property type="match status" value="1"/>
</dbReference>
<dbReference type="NCBIfam" id="NF006049">
    <property type="entry name" value="PRK08195.1"/>
    <property type="match status" value="1"/>
</dbReference>
<dbReference type="PANTHER" id="PTHR10277:SF9">
    <property type="entry name" value="2-ISOPROPYLMALATE SYNTHASE 1, CHLOROPLASTIC-RELATED"/>
    <property type="match status" value="1"/>
</dbReference>
<dbReference type="PANTHER" id="PTHR10277">
    <property type="entry name" value="HOMOCITRATE SYNTHASE-RELATED"/>
    <property type="match status" value="1"/>
</dbReference>
<dbReference type="Pfam" id="PF07836">
    <property type="entry name" value="DmpG_comm"/>
    <property type="match status" value="1"/>
</dbReference>
<dbReference type="Pfam" id="PF00682">
    <property type="entry name" value="HMGL-like"/>
    <property type="match status" value="1"/>
</dbReference>
<dbReference type="SUPFAM" id="SSF51569">
    <property type="entry name" value="Aldolase"/>
    <property type="match status" value="1"/>
</dbReference>
<dbReference type="SUPFAM" id="SSF89000">
    <property type="entry name" value="post-HMGL domain-like"/>
    <property type="match status" value="1"/>
</dbReference>
<dbReference type="PROSITE" id="PS50991">
    <property type="entry name" value="PYR_CT"/>
    <property type="match status" value="1"/>
</dbReference>
<reference key="1">
    <citation type="journal article" date="2006" name="Nat. Biotechnol.">
        <title>Genome sequence of the bioplastic-producing 'Knallgas' bacterium Ralstonia eutropha H16.</title>
        <authorList>
            <person name="Pohlmann A."/>
            <person name="Fricke W.F."/>
            <person name="Reinecke F."/>
            <person name="Kusian B."/>
            <person name="Liesegang H."/>
            <person name="Cramm R."/>
            <person name="Eitinger T."/>
            <person name="Ewering C."/>
            <person name="Poetter M."/>
            <person name="Schwartz E."/>
            <person name="Strittmatter A."/>
            <person name="Voss I."/>
            <person name="Gottschalk G."/>
            <person name="Steinbuechel A."/>
            <person name="Friedrich B."/>
            <person name="Bowien B."/>
        </authorList>
    </citation>
    <scope>NUCLEOTIDE SEQUENCE [LARGE SCALE GENOMIC DNA]</scope>
    <source>
        <strain>ATCC 17699 / DSM 428 / KCTC 22496 / NCIMB 10442 / H16 / Stanier 337</strain>
    </source>
</reference>